<comment type="function">
    <text evidence="4 5 8">Aerial growth, conidiation, and dispersal of filamentous fungi in the environment rely upon a capability of their secreting small amphipathic proteins called hydrophobins (HPBs) with low sequence identity. Class I can self-assemble into an outermost layer of rodlet bundles on aerial cell surfaces, conferring cellular hydrophobicity that supports fungal growth, development and dispersal; whereas Class II form highly ordered films at water-air interfaces through intermolecular interactions but contribute nothing to the rodlet structure (Probable). RodA is a class I hydrophobin involved in the cell surface hydrophobicity and conidiation under aerial conditions (PubMed:18093806). The surface rodlet layer of the conidial cell wall makes airborne conidia of filamentous fungi inert to both innate and adaptive immunity (PubMed:19713928).</text>
</comment>
<comment type="subunit">
    <text evidence="1">Self-assembles to form functional amyloid fibrils called rodlets. Self-assembly into fibrillar rodlets occurs spontaneously at hydrophobic:hydrophilic interfaces and the rodlets further associate laterally to form amphipathic monolayers.</text>
</comment>
<comment type="subcellular location">
    <subcellularLocation>
        <location evidence="4 5">Secreted</location>
    </subcellularLocation>
    <subcellularLocation>
        <location evidence="4 5">Secreted</location>
        <location evidence="4 5">Cell wall</location>
    </subcellularLocation>
</comment>
<comment type="induction">
    <text evidence="4 6">Expression is repressed during growth in liquids, whereas several days of growth under aerial conditions of solid culture induces expression.</text>
</comment>
<comment type="similarity">
    <text evidence="8">Belongs to the fungal hydrophobin family.</text>
</comment>
<protein>
    <recommendedName>
        <fullName evidence="7">Class I hydrophobin rodA</fullName>
    </recommendedName>
    <alternativeName>
        <fullName evidence="7">Rodlet protein A</fullName>
    </alternativeName>
</protein>
<feature type="signal peptide" evidence="2">
    <location>
        <begin position="1"/>
        <end position="18"/>
    </location>
</feature>
<feature type="chain" id="PRO_5013984499" description="Class I hydrophobin rodA">
    <location>
        <begin position="19"/>
        <end position="164"/>
    </location>
</feature>
<feature type="glycosylation site" description="N-linked (GlcNAc...) asparagine" evidence="3">
    <location>
        <position position="50"/>
    </location>
</feature>
<feature type="disulfide bond" evidence="1">
    <location>
        <begin position="60"/>
        <end position="138"/>
    </location>
</feature>
<feature type="disulfide bond" evidence="1">
    <location>
        <begin position="68"/>
        <end position="132"/>
    </location>
</feature>
<feature type="disulfide bond" evidence="1">
    <location>
        <begin position="69"/>
        <end position="109"/>
    </location>
</feature>
<feature type="disulfide bond" evidence="1">
    <location>
        <begin position="139"/>
        <end position="157"/>
    </location>
</feature>
<sequence length="164" mass="16370">MRFSISALVLGLAATVYALPPGAPSAGGAGSGNGVGNKGNTDVRFSVPDNMTVKQAQAECGDQAQLSCCNKAVYAGDTTDINSGILGGTLSNLIGSGSGASGLGLFDQCSKLDLQIPVLIGIPIQDLINQKCKQNIACCQNSPSSANSDLIGLGLPCVALGSIL</sequence>
<name>RODA_PENCA</name>
<organism>
    <name type="scientific">Penicillium camembertii</name>
    <dbReference type="NCBI Taxonomy" id="5075"/>
    <lineage>
        <taxon>Eukaryota</taxon>
        <taxon>Fungi</taxon>
        <taxon>Dikarya</taxon>
        <taxon>Ascomycota</taxon>
        <taxon>Pezizomycotina</taxon>
        <taxon>Eurotiomycetes</taxon>
        <taxon>Eurotiomycetidae</taxon>
        <taxon>Eurotiales</taxon>
        <taxon>Aspergillaceae</taxon>
        <taxon>Penicillium</taxon>
    </lineage>
</organism>
<keyword id="KW-0134">Cell wall</keyword>
<keyword id="KW-0183">Conidiation</keyword>
<keyword id="KW-1015">Disulfide bond</keyword>
<keyword id="KW-0325">Glycoprotein</keyword>
<keyword id="KW-0964">Secreted</keyword>
<keyword id="KW-0732">Signal</keyword>
<keyword id="KW-0749">Sporulation</keyword>
<dbReference type="EMBL" id="DQ023120">
    <property type="protein sequence ID" value="AAY88881.1"/>
    <property type="molecule type" value="Genomic_DNA"/>
</dbReference>
<dbReference type="GO" id="GO:0005576">
    <property type="term" value="C:extracellular region"/>
    <property type="evidence" value="ECO:0007669"/>
    <property type="project" value="UniProtKB-KW"/>
</dbReference>
<dbReference type="GO" id="GO:0009277">
    <property type="term" value="C:fungal-type cell wall"/>
    <property type="evidence" value="ECO:0007669"/>
    <property type="project" value="InterPro"/>
</dbReference>
<dbReference type="GO" id="GO:0005199">
    <property type="term" value="F:structural constituent of cell wall"/>
    <property type="evidence" value="ECO:0007669"/>
    <property type="project" value="InterPro"/>
</dbReference>
<dbReference type="InterPro" id="IPR001338">
    <property type="entry name" value="Hydrophobin"/>
</dbReference>
<dbReference type="InterPro" id="IPR019778">
    <property type="entry name" value="Hydrophobin_CS"/>
</dbReference>
<dbReference type="Pfam" id="PF01185">
    <property type="entry name" value="Hydrophobin"/>
    <property type="match status" value="1"/>
</dbReference>
<dbReference type="SMART" id="SM00075">
    <property type="entry name" value="HYDRO"/>
    <property type="match status" value="1"/>
</dbReference>
<dbReference type="PROSITE" id="PS00956">
    <property type="entry name" value="HYDROPHOBIN"/>
    <property type="match status" value="1"/>
</dbReference>
<gene>
    <name evidence="7" type="primary">rodA</name>
</gene>
<accession>Q1I187</accession>
<reference key="1">
    <citation type="journal article" date="2008" name="Res. Microbiol.">
        <title>Cloning and expression of genes involved in conidiation and surface properties of Penicillium camemberti grown in liquid and solid cultures.</title>
        <authorList>
            <person name="Boualem K."/>
            <person name="Wache Y."/>
            <person name="Garmyn D."/>
            <person name="Karbowiak T."/>
            <person name="Durand A."/>
            <person name="Gervais P."/>
            <person name="Cavin J.F."/>
        </authorList>
    </citation>
    <scope>NUCLEOTIDE SEQUENCE [GENOMIC DNA]</scope>
    <scope>INDUCTION</scope>
    <scope>SUBCELLULAR LOCATION</scope>
    <scope>FUNCTION</scope>
    <source>
        <strain>PCENS1</strain>
    </source>
</reference>
<reference key="2">
    <citation type="journal article" date="2009" name="Nature">
        <title>Surface hydrophobin prevents immune recognition of airborne fungal spores.</title>
        <authorList>
            <person name="Aimanianda V."/>
            <person name="Bayry J."/>
            <person name="Bozza S."/>
            <person name="Kniemeyer O."/>
            <person name="Perruccio K."/>
            <person name="Elluru S.R."/>
            <person name="Clavaud C."/>
            <person name="Paris S."/>
            <person name="Brakhage A.A."/>
            <person name="Kaveri S.V."/>
            <person name="Romani L."/>
            <person name="Latge J.P."/>
        </authorList>
    </citation>
    <scope>FUNCTION</scope>
    <scope>SUBCELLULAR LOCATION</scope>
</reference>
<reference key="3">
    <citation type="journal article" date="2016" name="Biotechnol. Lett.">
        <title>Conidiation of Penicillium camemberti in submerged liquid cultures is dependent on the nitrogen source.</title>
        <authorList>
            <person name="Boualem K."/>
            <person name="Labrie S."/>
            <person name="Gervais P."/>
            <person name="Wache Y."/>
            <person name="Cavin J.F."/>
        </authorList>
    </citation>
    <scope>INDUCTION</scope>
</reference>
<evidence type="ECO:0000250" key="1">
    <source>
        <dbReference type="UniProtKB" id="Q04571"/>
    </source>
</evidence>
<evidence type="ECO:0000255" key="2"/>
<evidence type="ECO:0000255" key="3">
    <source>
        <dbReference type="PROSITE-ProRule" id="PRU00498"/>
    </source>
</evidence>
<evidence type="ECO:0000269" key="4">
    <source>
    </source>
</evidence>
<evidence type="ECO:0000269" key="5">
    <source>
    </source>
</evidence>
<evidence type="ECO:0000269" key="6">
    <source>
    </source>
</evidence>
<evidence type="ECO:0000303" key="7">
    <source>
    </source>
</evidence>
<evidence type="ECO:0000305" key="8"/>
<proteinExistence type="evidence at transcript level"/>